<feature type="chain" id="PRO_0000047673" description="Zinc finger protein 581">
    <location>
        <begin position="1"/>
        <end position="197"/>
    </location>
</feature>
<feature type="zinc finger region" description="C2H2-type 1" evidence="1">
    <location>
        <begin position="87"/>
        <end position="109"/>
    </location>
</feature>
<feature type="zinc finger region" description="C2H2-type 2" evidence="1">
    <location>
        <begin position="115"/>
        <end position="137"/>
    </location>
</feature>
<feature type="zinc finger region" description="C2H2-type 3" evidence="1">
    <location>
        <begin position="145"/>
        <end position="167"/>
    </location>
</feature>
<feature type="zinc finger region" description="C2H2-type 4" evidence="1">
    <location>
        <begin position="173"/>
        <end position="196"/>
    </location>
</feature>
<feature type="region of interest" description="Disordered" evidence="2">
    <location>
        <begin position="1"/>
        <end position="52"/>
    </location>
</feature>
<feature type="compositionally biased region" description="Pro residues" evidence="2">
    <location>
        <begin position="1"/>
        <end position="10"/>
    </location>
</feature>
<feature type="compositionally biased region" description="Low complexity" evidence="2">
    <location>
        <begin position="35"/>
        <end position="44"/>
    </location>
</feature>
<sequence>MLVLPSPCPQPLAFSSVETMEGPPRRTCRSPEPGPSSSIGSPQASSPPRPNHYLLIDTQGVPYTVLVDEESQREPGASGAPGQKKCYSCPVCSRVFEYMSYLQRHSITHSEVKPFECDICGKAFKRASHLARHHSIHLAGGGRPHGCPLCPRRFRDAGELAQHSRVHSGERPFQCPHCPRRFMEQNTLQKHTRWKHP</sequence>
<comment type="function">
    <text>May be involved in transcriptional regulation.</text>
</comment>
<comment type="interaction">
    <interactant intactId="EBI-745520">
        <id>Q9P0T4</id>
    </interactant>
    <interactant intactId="EBI-297683">
        <id>Q96CW1</id>
        <label>AP2M1</label>
    </interactant>
    <organismsDiffer>false</organismsDiffer>
    <experiments>3</experiments>
</comment>
<comment type="interaction">
    <interactant intactId="EBI-745520">
        <id>Q9P0T4</id>
    </interactant>
    <interactant intactId="EBI-1044593">
        <id>Q9NRW3</id>
        <label>APOBEC3C</label>
    </interactant>
    <organismsDiffer>false</organismsDiffer>
    <experiments>3</experiments>
</comment>
<comment type="interaction">
    <interactant intactId="EBI-745520">
        <id>Q9P0T4</id>
    </interactant>
    <interactant intactId="EBI-12015080">
        <id>Q8WXK3-2</id>
        <label>ASB13</label>
    </interactant>
    <organismsDiffer>false</organismsDiffer>
    <experiments>3</experiments>
</comment>
<comment type="interaction">
    <interactant intactId="EBI-745520">
        <id>Q9P0T4</id>
    </interactant>
    <interactant intactId="EBI-12006308">
        <id>Q7Z3C6-3</id>
        <label>ATG9A</label>
    </interactant>
    <organismsDiffer>false</organismsDiffer>
    <experiments>3</experiments>
</comment>
<comment type="interaction">
    <interactant intactId="EBI-745520">
        <id>Q9P0T4</id>
    </interactant>
    <interactant intactId="EBI-744695">
        <id>Q8N9N5</id>
        <label>BANP</label>
    </interactant>
    <organismsDiffer>false</organismsDiffer>
    <experiments>3</experiments>
</comment>
<comment type="interaction">
    <interactant intactId="EBI-745520">
        <id>Q9P0T4</id>
    </interactant>
    <interactant intactId="EBI-11524452">
        <id>Q8N9N5-2</id>
        <label>BANP</label>
    </interactant>
    <organismsDiffer>false</organismsDiffer>
    <experiments>3</experiments>
</comment>
<comment type="interaction">
    <interactant intactId="EBI-745520">
        <id>Q9P0T4</id>
    </interactant>
    <interactant intactId="EBI-12006120">
        <id>A0A087WZT3</id>
        <label>BOLA2-SMG1P6</label>
    </interactant>
    <organismsDiffer>false</organismsDiffer>
    <experiments>3</experiments>
</comment>
<comment type="interaction">
    <interactant intactId="EBI-745520">
        <id>Q9P0T4</id>
    </interactant>
    <interactant intactId="EBI-358049">
        <id>Q13895</id>
        <label>BYSL</label>
    </interactant>
    <organismsDiffer>false</organismsDiffer>
    <experiments>3</experiments>
</comment>
<comment type="interaction">
    <interactant intactId="EBI-745520">
        <id>Q9P0T4</id>
    </interactant>
    <interactant intactId="EBI-739580">
        <id>Q13137</id>
        <label>CALCOCO2</label>
    </interactant>
    <organismsDiffer>false</organismsDiffer>
    <experiments>3</experiments>
</comment>
<comment type="interaction">
    <interactant intactId="EBI-745520">
        <id>Q9P0T4</id>
    </interactant>
    <interactant intactId="EBI-3866279">
        <id>Q9BWT7</id>
        <label>CARD10</label>
    </interactant>
    <organismsDiffer>false</organismsDiffer>
    <experiments>3</experiments>
</comment>
<comment type="interaction">
    <interactant intactId="EBI-745520">
        <id>Q9P0T4</id>
    </interactant>
    <interactant intactId="EBI-741724">
        <id>Q8NA61</id>
        <label>CBY2</label>
    </interactant>
    <organismsDiffer>false</organismsDiffer>
    <experiments>3</experiments>
</comment>
<comment type="interaction">
    <interactant intactId="EBI-745520">
        <id>Q9P0T4</id>
    </interactant>
    <interactant intactId="EBI-11524851">
        <id>Q8NA61-2</id>
        <label>CBY2</label>
    </interactant>
    <organismsDiffer>false</organismsDiffer>
    <experiments>3</experiments>
</comment>
<comment type="interaction">
    <interactant intactId="EBI-745520">
        <id>Q9P0T4</id>
    </interactant>
    <interactant intactId="EBI-10171416">
        <id>Q96JN2-2</id>
        <label>CCDC136</label>
    </interactant>
    <organismsDiffer>false</organismsDiffer>
    <experiments>3</experiments>
</comment>
<comment type="interaction">
    <interactant intactId="EBI-745520">
        <id>Q9P0T4</id>
    </interactant>
    <interactant intactId="EBI-748961">
        <id>O95273</id>
        <label>CCNDBP1</label>
    </interactant>
    <organismsDiffer>false</organismsDiffer>
    <experiments>3</experiments>
</comment>
<comment type="interaction">
    <interactant intactId="EBI-745520">
        <id>Q9P0T4</id>
    </interactant>
    <interactant intactId="EBI-11156883">
        <id>Q8WUH1</id>
        <label>CHURC1</label>
    </interactant>
    <organismsDiffer>false</organismsDiffer>
    <experiments>3</experiments>
</comment>
<comment type="interaction">
    <interactant intactId="EBI-745520">
        <id>Q9P0T4</id>
    </interactant>
    <interactant intactId="EBI-12819063">
        <id>Q9BYD5</id>
        <label>CNFN</label>
    </interactant>
    <organismsDiffer>false</organismsDiffer>
    <experiments>3</experiments>
</comment>
<comment type="interaction">
    <interactant intactId="EBI-745520">
        <id>Q9P0T4</id>
    </interactant>
    <interactant intactId="EBI-3867333">
        <id>A8MQ03</id>
        <label>CYSRT1</label>
    </interactant>
    <organismsDiffer>false</organismsDiffer>
    <experiments>6</experiments>
</comment>
<comment type="interaction">
    <interactant intactId="EBI-745520">
        <id>Q9P0T4</id>
    </interactant>
    <interactant intactId="EBI-10976677">
        <id>G5E9A7</id>
        <label>DMWD</label>
    </interactant>
    <organismsDiffer>false</organismsDiffer>
    <experiments>3</experiments>
</comment>
<comment type="interaction">
    <interactant intactId="EBI-745520">
        <id>Q9P0T4</id>
    </interactant>
    <interactant intactId="EBI-10174653">
        <id>Q8NF50-2</id>
        <label>DOCK8</label>
    </interactant>
    <organismsDiffer>false</organismsDiffer>
    <experiments>3</experiments>
</comment>
<comment type="interaction">
    <interactant intactId="EBI-745520">
        <id>Q9P0T4</id>
    </interactant>
    <interactant intactId="EBI-750300">
        <id>Q01658</id>
        <label>DR1</label>
    </interactant>
    <organismsDiffer>false</organismsDiffer>
    <experiments>3</experiments>
</comment>
<comment type="interaction">
    <interactant intactId="EBI-745520">
        <id>Q9P0T4</id>
    </interactant>
    <interactant intactId="EBI-739789">
        <id>Q92997</id>
        <label>DVL3</label>
    </interactant>
    <organismsDiffer>false</organismsDiffer>
    <experiments>3</experiments>
</comment>
<comment type="interaction">
    <interactant intactId="EBI-745520">
        <id>Q9P0T4</id>
    </interactant>
    <interactant intactId="EBI-743414">
        <id>O95967</id>
        <label>EFEMP2</label>
    </interactant>
    <organismsDiffer>false</organismsDiffer>
    <experiments>3</experiments>
</comment>
<comment type="interaction">
    <interactant intactId="EBI-745520">
        <id>Q9P0T4</id>
    </interactant>
    <interactant intactId="EBI-744099">
        <id>Q9H0I2</id>
        <label>ENKD1</label>
    </interactant>
    <organismsDiffer>false</organismsDiffer>
    <experiments>3</experiments>
</comment>
<comment type="interaction">
    <interactant intactId="EBI-745520">
        <id>Q9P0T4</id>
    </interactant>
    <interactant intactId="EBI-2870454">
        <id>Q16134</id>
        <label>ETFDH</label>
    </interactant>
    <organismsDiffer>false</organismsDiffer>
    <experiments>3</experiments>
</comment>
<comment type="interaction">
    <interactant intactId="EBI-745520">
        <id>Q9P0T4</id>
    </interactant>
    <interactant intactId="EBI-6658203">
        <id>Q86YD7</id>
        <label>FAM90A1</label>
    </interactant>
    <organismsDiffer>false</organismsDiffer>
    <experiments>3</experiments>
</comment>
<comment type="interaction">
    <interactant intactId="EBI-745520">
        <id>Q9P0T4</id>
    </interactant>
    <interactant intactId="EBI-2339898">
        <id>Q9NW38</id>
        <label>FANCL</label>
    </interactant>
    <organismsDiffer>false</organismsDiffer>
    <experiments>3</experiments>
</comment>
<comment type="interaction">
    <interactant intactId="EBI-745520">
        <id>Q9P0T4</id>
    </interactant>
    <interactant intactId="EBI-348399">
        <id>P22607</id>
        <label>FGFR3</label>
    </interactant>
    <organismsDiffer>false</organismsDiffer>
    <experiments>3</experiments>
</comment>
<comment type="interaction">
    <interactant intactId="EBI-745520">
        <id>Q9P0T4</id>
    </interactant>
    <interactant intactId="EBI-750641">
        <id>Q5TD97</id>
        <label>FHL5</label>
    </interactant>
    <organismsDiffer>false</organismsDiffer>
    <experiments>3</experiments>
</comment>
<comment type="interaction">
    <interactant intactId="EBI-745520">
        <id>Q9P0T4</id>
    </interactant>
    <interactant intactId="EBI-5661036">
        <id>A1L4K1</id>
        <label>FSD2</label>
    </interactant>
    <organismsDiffer>false</organismsDiffer>
    <experiments>6</experiments>
</comment>
<comment type="interaction">
    <interactant intactId="EBI-745520">
        <id>Q9P0T4</id>
    </interactant>
    <interactant intactId="EBI-744302">
        <id>P14136</id>
        <label>GFAP</label>
    </interactant>
    <organismsDiffer>false</organismsDiffer>
    <experiments>3</experiments>
</comment>
<comment type="interaction">
    <interactant intactId="EBI-745520">
        <id>Q9P0T4</id>
    </interactant>
    <interactant intactId="EBI-618309">
        <id>Q08379</id>
        <label>GOLGA2</label>
    </interactant>
    <organismsDiffer>false</organismsDiffer>
    <experiments>3</experiments>
</comment>
<comment type="interaction">
    <interactant intactId="EBI-745520">
        <id>Q9P0T4</id>
    </interactant>
    <interactant intactId="EBI-5916454">
        <id>A6NEM1</id>
        <label>GOLGA6L9</label>
    </interactant>
    <organismsDiffer>false</organismsDiffer>
    <experiments>3</experiments>
</comment>
<comment type="interaction">
    <interactant intactId="EBI-745520">
        <id>Q9P0T4</id>
    </interactant>
    <interactant intactId="EBI-349832">
        <id>Q9HD26</id>
        <label>GOPC</label>
    </interactant>
    <organismsDiffer>false</organismsDiffer>
    <experiments>3</experiments>
</comment>
<comment type="interaction">
    <interactant intactId="EBI-745520">
        <id>Q9P0T4</id>
    </interactant>
    <interactant intactId="EBI-347538">
        <id>Q9Y4H4</id>
        <label>GPSM3</label>
    </interactant>
    <organismsDiffer>false</organismsDiffer>
    <experiments>3</experiments>
</comment>
<comment type="interaction">
    <interactant intactId="EBI-745520">
        <id>Q9P0T4</id>
    </interactant>
    <interactant intactId="EBI-351506">
        <id>P06396</id>
        <label>GSN</label>
    </interactant>
    <organismsDiffer>false</organismsDiffer>
    <experiments>3</experiments>
</comment>
<comment type="interaction">
    <interactant intactId="EBI-745520">
        <id>Q9P0T4</id>
    </interactant>
    <interactant intactId="EBI-1054873">
        <id>Q9Y5Q9</id>
        <label>GTF3C3</label>
    </interactant>
    <organismsDiffer>false</organismsDiffer>
    <experiments>3</experiments>
</comment>
<comment type="interaction">
    <interactant intactId="EBI-745520">
        <id>Q9P0T4</id>
    </interactant>
    <interactant intactId="EBI-2549423">
        <id>Q6NT76</id>
        <label>HMBOX1</label>
    </interactant>
    <organismsDiffer>false</organismsDiffer>
    <experiments>6</experiments>
</comment>
<comment type="interaction">
    <interactant intactId="EBI-745520">
        <id>Q9P0T4</id>
    </interactant>
    <interactant intactId="EBI-352986">
        <id>P52597</id>
        <label>HNRNPF</label>
    </interactant>
    <organismsDiffer>false</organismsDiffer>
    <experiments>3</experiments>
</comment>
<comment type="interaction">
    <interactant intactId="EBI-745520">
        <id>Q9P0T4</id>
    </interactant>
    <interactant intactId="EBI-7116203">
        <id>O75031</id>
        <label>HSF2BP</label>
    </interactant>
    <organismsDiffer>false</organismsDiffer>
    <experiments>6</experiments>
</comment>
<comment type="interaction">
    <interactant intactId="EBI-745520">
        <id>Q9P0T4</id>
    </interactant>
    <interactant intactId="EBI-745305">
        <id>Q13422</id>
        <label>IKZF1</label>
    </interactant>
    <organismsDiffer>false</organismsDiffer>
    <experiments>3</experiments>
</comment>
<comment type="interaction">
    <interactant intactId="EBI-745520">
        <id>Q9P0T4</id>
    </interactant>
    <interactant intactId="EBI-17178971">
        <id>Q14005-2</id>
        <label>IL16</label>
    </interactant>
    <organismsDiffer>false</organismsDiffer>
    <experiments>3</experiments>
</comment>
<comment type="interaction">
    <interactant intactId="EBI-745520">
        <id>Q9P0T4</id>
    </interactant>
    <interactant intactId="EBI-1055254">
        <id>Q8WXH2</id>
        <label>JPH3</label>
    </interactant>
    <organismsDiffer>false</organismsDiffer>
    <experiments>3</experiments>
</comment>
<comment type="interaction">
    <interactant intactId="EBI-745520">
        <id>Q9P0T4</id>
    </interactant>
    <interactant intactId="EBI-742808">
        <id>Q5VWX1</id>
        <label>KHDRBS2</label>
    </interactant>
    <organismsDiffer>false</organismsDiffer>
    <experiments>3</experiments>
</comment>
<comment type="interaction">
    <interactant intactId="EBI-745520">
        <id>Q9P0T4</id>
    </interactant>
    <interactant intactId="EBI-3044087">
        <id>Q7Z3Y8</id>
        <label>KRT27</label>
    </interactant>
    <organismsDiffer>false</organismsDiffer>
    <experiments>3</experiments>
</comment>
<comment type="interaction">
    <interactant intactId="EBI-745520">
        <id>Q9P0T4</id>
    </interactant>
    <interactant intactId="EBI-1047093">
        <id>O76011</id>
        <label>KRT34</label>
    </interactant>
    <organismsDiffer>false</organismsDiffer>
    <experiments>3</experiments>
</comment>
<comment type="interaction">
    <interactant intactId="EBI-745520">
        <id>Q9P0T4</id>
    </interactant>
    <interactant intactId="EBI-10171697">
        <id>Q6A162</id>
        <label>KRT40</label>
    </interactant>
    <organismsDiffer>false</organismsDiffer>
    <experiments>6</experiments>
</comment>
<comment type="interaction">
    <interactant intactId="EBI-745520">
        <id>Q9P0T4</id>
    </interactant>
    <interactant intactId="EBI-11959885">
        <id>Q07627</id>
        <label>KRTAP1-1</label>
    </interactant>
    <organismsDiffer>false</organismsDiffer>
    <experiments>3</experiments>
</comment>
<comment type="interaction">
    <interactant intactId="EBI-745520">
        <id>Q9P0T4</id>
    </interactant>
    <interactant intactId="EBI-10172290">
        <id>P60409</id>
        <label>KRTAP10-7</label>
    </interactant>
    <organismsDiffer>false</organismsDiffer>
    <experiments>6</experiments>
</comment>
<comment type="interaction">
    <interactant intactId="EBI-745520">
        <id>Q9P0T4</id>
    </interactant>
    <interactant intactId="EBI-10171774">
        <id>P60410</id>
        <label>KRTAP10-8</label>
    </interactant>
    <organismsDiffer>false</organismsDiffer>
    <experiments>3</experiments>
</comment>
<comment type="interaction">
    <interactant intactId="EBI-745520">
        <id>Q9P0T4</id>
    </interactant>
    <interactant intactId="EBI-10172052">
        <id>P60411</id>
        <label>KRTAP10-9</label>
    </interactant>
    <organismsDiffer>false</organismsDiffer>
    <experiments>3</experiments>
</comment>
<comment type="interaction">
    <interactant intactId="EBI-745520">
        <id>Q9P0T4</id>
    </interactant>
    <interactant intactId="EBI-10176379">
        <id>P59991</id>
        <label>KRTAP12-2</label>
    </interactant>
    <organismsDiffer>false</organismsDiffer>
    <experiments>3</experiments>
</comment>
<comment type="interaction">
    <interactant intactId="EBI-745520">
        <id>Q9P0T4</id>
    </interactant>
    <interactant intactId="EBI-14065470">
        <id>Q9BYR9</id>
        <label>KRTAP2-4</label>
    </interactant>
    <organismsDiffer>false</organismsDiffer>
    <experiments>3</experiments>
</comment>
<comment type="interaction">
    <interactant intactId="EBI-745520">
        <id>Q9P0T4</id>
    </interactant>
    <interactant intactId="EBI-739863">
        <id>Q9BQ66</id>
        <label>KRTAP4-12</label>
    </interactant>
    <organismsDiffer>false</organismsDiffer>
    <experiments>4</experiments>
</comment>
<comment type="interaction">
    <interactant intactId="EBI-745520">
        <id>Q9P0T4</id>
    </interactant>
    <interactant intactId="EBI-10172511">
        <id>Q9BYR5</id>
        <label>KRTAP4-2</label>
    </interactant>
    <organismsDiffer>false</organismsDiffer>
    <experiments>3</experiments>
</comment>
<comment type="interaction">
    <interactant intactId="EBI-745520">
        <id>Q9P0T4</id>
    </interactant>
    <interactant intactId="EBI-3958099">
        <id>P26371</id>
        <label>KRTAP5-9</label>
    </interactant>
    <organismsDiffer>false</organismsDiffer>
    <experiments>3</experiments>
</comment>
<comment type="interaction">
    <interactant intactId="EBI-745520">
        <id>Q9P0T4</id>
    </interactant>
    <interactant intactId="EBI-11962084">
        <id>Q3LI66</id>
        <label>KRTAP6-2</label>
    </interactant>
    <organismsDiffer>false</organismsDiffer>
    <experiments>3</experiments>
</comment>
<comment type="interaction">
    <interactant intactId="EBI-745520">
        <id>Q9P0T4</id>
    </interactant>
    <interactant intactId="EBI-739832">
        <id>Q8TBB1</id>
        <label>LNX1</label>
    </interactant>
    <organismsDiffer>false</organismsDiffer>
    <experiments>6</experiments>
</comment>
<comment type="interaction">
    <interactant intactId="EBI-745520">
        <id>Q9P0T4</id>
    </interactant>
    <interactant intactId="EBI-741037">
        <id>Q9BRK4</id>
        <label>LZTS2</label>
    </interactant>
    <organismsDiffer>false</organismsDiffer>
    <experiments>4</experiments>
</comment>
<comment type="interaction">
    <interactant intactId="EBI-745520">
        <id>Q9P0T4</id>
    </interactant>
    <interactant intactId="EBI-724076">
        <id>Q99750</id>
        <label>MDFI</label>
    </interactant>
    <organismsDiffer>false</organismsDiffer>
    <experiments>8</experiments>
</comment>
<comment type="interaction">
    <interactant intactId="EBI-745520">
        <id>Q9P0T4</id>
    </interactant>
    <interactant intactId="EBI-742948">
        <id>Q5JR59</id>
        <label>MTUS2</label>
    </interactant>
    <organismsDiffer>false</organismsDiffer>
    <experiments>4</experiments>
</comment>
<comment type="interaction">
    <interactant intactId="EBI-745520">
        <id>Q9P0T4</id>
    </interactant>
    <interactant intactId="EBI-10261509">
        <id>Q8IV28</id>
        <label>NID2</label>
    </interactant>
    <organismsDiffer>false</organismsDiffer>
    <experiments>3</experiments>
</comment>
<comment type="interaction">
    <interactant intactId="EBI-745520">
        <id>Q9P0T4</id>
    </interactant>
    <interactant intactId="EBI-945833">
        <id>Q7Z3S9</id>
        <label>NOTCH2NLA</label>
    </interactant>
    <organismsDiffer>false</organismsDiffer>
    <experiments>3</experiments>
</comment>
<comment type="interaction">
    <interactant intactId="EBI-745520">
        <id>Q9P0T4</id>
    </interactant>
    <interactant intactId="EBI-22310682">
        <id>P0DPK4</id>
        <label>NOTCH2NLC</label>
    </interactant>
    <organismsDiffer>false</organismsDiffer>
    <experiments>3</experiments>
</comment>
<comment type="interaction">
    <interactant intactId="EBI-745520">
        <id>Q9P0T4</id>
    </interactant>
    <interactant intactId="EBI-10297093">
        <id>Q9BRQ3</id>
        <label>NUDT22</label>
    </interactant>
    <organismsDiffer>false</organismsDiffer>
    <experiments>3</experiments>
</comment>
<comment type="interaction">
    <interactant intactId="EBI-745520">
        <id>Q9P0T4</id>
    </interactant>
    <interactant intactId="EBI-1105124">
        <id>Q5VU43</id>
        <label>PDE4DIP</label>
    </interactant>
    <organismsDiffer>false</organismsDiffer>
    <experiments>3</experiments>
</comment>
<comment type="interaction">
    <interactant intactId="EBI-745520">
        <id>Q9P0T4</id>
    </interactant>
    <interactant intactId="EBI-9640281">
        <id>Q5VU43-2</id>
        <label>PDE4DIP</label>
    </interactant>
    <organismsDiffer>false</organismsDiffer>
    <experiments>3</experiments>
</comment>
<comment type="interaction">
    <interactant intactId="EBI-745520">
        <id>Q9P0T4</id>
    </interactant>
    <interactant intactId="EBI-602382">
        <id>Q16512</id>
        <label>PKN1</label>
    </interactant>
    <organismsDiffer>false</organismsDiffer>
    <experiments>3</experiments>
</comment>
<comment type="interaction">
    <interactant intactId="EBI-745520">
        <id>Q9P0T4</id>
    </interactant>
    <interactant intactId="EBI-2876622">
        <id>Q9UPG8</id>
        <label>PLAGL2</label>
    </interactant>
    <organismsDiffer>false</organismsDiffer>
    <experiments>3</experiments>
</comment>
<comment type="interaction">
    <interactant intactId="EBI-745520">
        <id>Q9P0T4</id>
    </interactant>
    <interactant intactId="EBI-742388">
        <id>Q9H8W4</id>
        <label>PLEKHF2</label>
    </interactant>
    <organismsDiffer>false</organismsDiffer>
    <experiments>3</experiments>
</comment>
<comment type="interaction">
    <interactant intactId="EBI-745520">
        <id>Q9P0T4</id>
    </interactant>
    <interactant intactId="EBI-302345">
        <id>Q8ND90</id>
        <label>PNMA1</label>
    </interactant>
    <organismsDiffer>false</organismsDiffer>
    <experiments>8</experiments>
</comment>
<comment type="interaction">
    <interactant intactId="EBI-745520">
        <id>Q9P0T4</id>
    </interactant>
    <interactant intactId="EBI-943588">
        <id>Q16633</id>
        <label>POU2AF1</label>
    </interactant>
    <organismsDiffer>false</organismsDiffer>
    <experiments>3</experiments>
</comment>
<comment type="interaction">
    <interactant intactId="EBI-745520">
        <id>Q9P0T4</id>
    </interactant>
    <interactant intactId="EBI-1053424">
        <id>O43741</id>
        <label>PRKAB2</label>
    </interactant>
    <organismsDiffer>false</organismsDiffer>
    <experiments>3</experiments>
</comment>
<comment type="interaction">
    <interactant intactId="EBI-745520">
        <id>Q9P0T4</id>
    </interactant>
    <interactant intactId="EBI-740322">
        <id>Q93062</id>
        <label>RBPMS</label>
    </interactant>
    <organismsDiffer>false</organismsDiffer>
    <experiments>4</experiments>
</comment>
<comment type="interaction">
    <interactant intactId="EBI-745520">
        <id>Q9P0T4</id>
    </interactant>
    <interactant intactId="EBI-740343">
        <id>Q93062-3</id>
        <label>RBPMS</label>
    </interactant>
    <organismsDiffer>false</organismsDiffer>
    <experiments>8</experiments>
</comment>
<comment type="interaction">
    <interactant intactId="EBI-745520">
        <id>Q9P0T4</id>
    </interactant>
    <interactant intactId="EBI-10182375">
        <id>Q9UFD9</id>
        <label>RIMBP3</label>
    </interactant>
    <organismsDiffer>false</organismsDiffer>
    <experiments>3</experiments>
</comment>
<comment type="interaction">
    <interactant intactId="EBI-745520">
        <id>Q9P0T4</id>
    </interactant>
    <interactant intactId="EBI-1054572">
        <id>Q96LW2</id>
        <label>RSKR</label>
    </interactant>
    <organismsDiffer>false</organismsDiffer>
    <experiments>3</experiments>
</comment>
<comment type="interaction">
    <interactant intactId="EBI-745520">
        <id>Q9P0T4</id>
    </interactant>
    <interactant intactId="EBI-742426">
        <id>Q9H190</id>
        <label>SDCBP2</label>
    </interactant>
    <organismsDiffer>false</organismsDiffer>
    <experiments>3</experiments>
</comment>
<comment type="interaction">
    <interactant intactId="EBI-745520">
        <id>Q9P0T4</id>
    </interactant>
    <interactant intactId="EBI-2822051">
        <id>Q14140</id>
        <label>SERTAD2</label>
    </interactant>
    <organismsDiffer>false</organismsDiffer>
    <experiments>3</experiments>
</comment>
<comment type="interaction">
    <interactant intactId="EBI-745520">
        <id>Q9P0T4</id>
    </interactant>
    <interactant intactId="EBI-355653">
        <id>Q92922</id>
        <label>SMARCC1</label>
    </interactant>
    <organismsDiffer>false</organismsDiffer>
    <experiments>3</experiments>
</comment>
<comment type="interaction">
    <interactant intactId="EBI-745520">
        <id>Q9P0T4</id>
    </interactant>
    <interactant intactId="EBI-3505701">
        <id>P35711</id>
        <label>SOX5</label>
    </interactant>
    <organismsDiffer>false</organismsDiffer>
    <experiments>3</experiments>
</comment>
<comment type="interaction">
    <interactant intactId="EBI-745520">
        <id>Q9P0T4</id>
    </interactant>
    <interactant intactId="EBI-11959123">
        <id>Q99932-2</id>
        <label>SPAG8</label>
    </interactant>
    <organismsDiffer>false</organismsDiffer>
    <experiments>3</experiments>
</comment>
<comment type="interaction">
    <interactant intactId="EBI-745520">
        <id>Q9P0T4</id>
    </interactant>
    <interactant intactId="EBI-742688">
        <id>Q9NZD8</id>
        <label>SPG21</label>
    </interactant>
    <organismsDiffer>false</organismsDiffer>
    <experiments>3</experiments>
</comment>
<comment type="interaction">
    <interactant intactId="EBI-745520">
        <id>Q9P0T4</id>
    </interactant>
    <interactant intactId="EBI-5235340">
        <id>Q7Z699</id>
        <label>SPRED1</label>
    </interactant>
    <organismsDiffer>false</organismsDiffer>
    <experiments>3</experiments>
</comment>
<comment type="interaction">
    <interactant intactId="EBI-745520">
        <id>Q9P0T4</id>
    </interactant>
    <interactant intactId="EBI-372899">
        <id>Q13148</id>
        <label>TARDBP</label>
    </interactant>
    <organismsDiffer>false</organismsDiffer>
    <experiments>6</experiments>
</comment>
<comment type="interaction">
    <interactant intactId="EBI-745520">
        <id>Q9P0T4</id>
    </interactant>
    <interactant intactId="EBI-750487">
        <id>Q8WW24</id>
        <label>TEKT4</label>
    </interactant>
    <organismsDiffer>false</organismsDiffer>
    <experiments>3</experiments>
</comment>
<comment type="interaction">
    <interactant intactId="EBI-745520">
        <id>Q9P0T4</id>
    </interactant>
    <interactant intactId="EBI-359224">
        <id>Q13077</id>
        <label>TRAF1</label>
    </interactant>
    <organismsDiffer>false</organismsDiffer>
    <experiments>3</experiments>
</comment>
<comment type="interaction">
    <interactant intactId="EBI-745520">
        <id>Q9P0T4</id>
    </interactant>
    <interactant intactId="EBI-3650647">
        <id>Q9BUZ4</id>
        <label>TRAF4</label>
    </interactant>
    <organismsDiffer>false</organismsDiffer>
    <experiments>6</experiments>
</comment>
<comment type="interaction">
    <interactant intactId="EBI-745520">
        <id>Q9P0T4</id>
    </interactant>
    <interactant intactId="EBI-740098">
        <id>P36406</id>
        <label>TRIM23</label>
    </interactant>
    <organismsDiffer>false</organismsDiffer>
    <experiments>8</experiments>
</comment>
<comment type="interaction">
    <interactant intactId="EBI-745520">
        <id>Q9P0T4</id>
    </interactant>
    <interactant intactId="EBI-719493">
        <id>P14373</id>
        <label>TRIM27</label>
    </interactant>
    <organismsDiffer>false</organismsDiffer>
    <experiments>6</experiments>
</comment>
<comment type="interaction">
    <interactant intactId="EBI-745520">
        <id>Q9P0T4</id>
    </interactant>
    <interactant intactId="EBI-742327">
        <id>Q15654</id>
        <label>TRIP6</label>
    </interactant>
    <organismsDiffer>false</organismsDiffer>
    <experiments>3</experiments>
</comment>
<comment type="interaction">
    <interactant intactId="EBI-745520">
        <id>Q9P0T4</id>
    </interactant>
    <interactant intactId="EBI-1052596">
        <id>P31930</id>
        <label>UQCRC1</label>
    </interactant>
    <organismsDiffer>false</organismsDiffer>
    <experiments>3</experiments>
</comment>
<comment type="interaction">
    <interactant intactId="EBI-745520">
        <id>Q9P0T4</id>
    </interactant>
    <interactant intactId="EBI-357430">
        <id>P61758</id>
        <label>VBP1</label>
    </interactant>
    <organismsDiffer>false</organismsDiffer>
    <experiments>3</experiments>
</comment>
<comment type="interaction">
    <interactant intactId="EBI-745520">
        <id>Q9P0T4</id>
    </interactant>
    <interactant intactId="EBI-12040603">
        <id>Q9NZC7-5</id>
        <label>WWOX</label>
    </interactant>
    <organismsDiffer>false</organismsDiffer>
    <experiments>3</experiments>
</comment>
<comment type="interaction">
    <interactant intactId="EBI-745520">
        <id>Q9P0T4</id>
    </interactant>
    <interactant intactId="EBI-12834294">
        <id>Q7L2R6-2</id>
        <label>ZNF765</label>
    </interactant>
    <organismsDiffer>false</organismsDiffer>
    <experiments>3</experiments>
</comment>
<comment type="interaction">
    <interactant intactId="EBI-745520">
        <id>Q9P0T4</id>
    </interactant>
    <interactant intactId="EBI-10240849">
        <id>Q3KQV3</id>
        <label>ZNF792</label>
    </interactant>
    <organismsDiffer>false</organismsDiffer>
    <experiments>3</experiments>
</comment>
<comment type="interaction">
    <interactant intactId="EBI-745520">
        <id>Q9P0T4</id>
    </interactant>
    <interactant intactId="EBI-527853">
        <id>Q9UGI0</id>
        <label>ZRANB1</label>
    </interactant>
    <organismsDiffer>false</organismsDiffer>
    <experiments>3</experiments>
</comment>
<comment type="subcellular location">
    <subcellularLocation>
        <location evidence="3">Nucleus</location>
    </subcellularLocation>
</comment>
<reference key="1">
    <citation type="journal article" date="2000" name="Genome Res.">
        <title>Cloning and functional analysis of cDNAs with open reading frames for 300 previously undefined genes expressed in CD34+ hematopoietic stem/progenitor cells.</title>
        <authorList>
            <person name="Zhang Q.-H."/>
            <person name="Ye M."/>
            <person name="Wu X.-Y."/>
            <person name="Ren S.-X."/>
            <person name="Zhao M."/>
            <person name="Zhao C.-J."/>
            <person name="Fu G."/>
            <person name="Shen Y."/>
            <person name="Fan H.-Y."/>
            <person name="Lu G."/>
            <person name="Zhong M."/>
            <person name="Xu X.-R."/>
            <person name="Han Z.-G."/>
            <person name="Zhang J.-W."/>
            <person name="Tao J."/>
            <person name="Huang Q.-H."/>
            <person name="Zhou J."/>
            <person name="Hu G.-X."/>
            <person name="Gu J."/>
            <person name="Chen S.-J."/>
            <person name="Chen Z."/>
        </authorList>
    </citation>
    <scope>NUCLEOTIDE SEQUENCE [LARGE SCALE MRNA]</scope>
    <source>
        <tissue>Umbilical cord blood</tissue>
    </source>
</reference>
<reference key="2">
    <citation type="journal article" date="2004" name="Nat. Genet.">
        <title>Complete sequencing and characterization of 21,243 full-length human cDNAs.</title>
        <authorList>
            <person name="Ota T."/>
            <person name="Suzuki Y."/>
            <person name="Nishikawa T."/>
            <person name="Otsuki T."/>
            <person name="Sugiyama T."/>
            <person name="Irie R."/>
            <person name="Wakamatsu A."/>
            <person name="Hayashi K."/>
            <person name="Sato H."/>
            <person name="Nagai K."/>
            <person name="Kimura K."/>
            <person name="Makita H."/>
            <person name="Sekine M."/>
            <person name="Obayashi M."/>
            <person name="Nishi T."/>
            <person name="Shibahara T."/>
            <person name="Tanaka T."/>
            <person name="Ishii S."/>
            <person name="Yamamoto J."/>
            <person name="Saito K."/>
            <person name="Kawai Y."/>
            <person name="Isono Y."/>
            <person name="Nakamura Y."/>
            <person name="Nagahari K."/>
            <person name="Murakami K."/>
            <person name="Yasuda T."/>
            <person name="Iwayanagi T."/>
            <person name="Wagatsuma M."/>
            <person name="Shiratori A."/>
            <person name="Sudo H."/>
            <person name="Hosoiri T."/>
            <person name="Kaku Y."/>
            <person name="Kodaira H."/>
            <person name="Kondo H."/>
            <person name="Sugawara M."/>
            <person name="Takahashi M."/>
            <person name="Kanda K."/>
            <person name="Yokoi T."/>
            <person name="Furuya T."/>
            <person name="Kikkawa E."/>
            <person name="Omura Y."/>
            <person name="Abe K."/>
            <person name="Kamihara K."/>
            <person name="Katsuta N."/>
            <person name="Sato K."/>
            <person name="Tanikawa M."/>
            <person name="Yamazaki M."/>
            <person name="Ninomiya K."/>
            <person name="Ishibashi T."/>
            <person name="Yamashita H."/>
            <person name="Murakawa K."/>
            <person name="Fujimori K."/>
            <person name="Tanai H."/>
            <person name="Kimata M."/>
            <person name="Watanabe M."/>
            <person name="Hiraoka S."/>
            <person name="Chiba Y."/>
            <person name="Ishida S."/>
            <person name="Ono Y."/>
            <person name="Takiguchi S."/>
            <person name="Watanabe S."/>
            <person name="Yosida M."/>
            <person name="Hotuta T."/>
            <person name="Kusano J."/>
            <person name="Kanehori K."/>
            <person name="Takahashi-Fujii A."/>
            <person name="Hara H."/>
            <person name="Tanase T.-O."/>
            <person name="Nomura Y."/>
            <person name="Togiya S."/>
            <person name="Komai F."/>
            <person name="Hara R."/>
            <person name="Takeuchi K."/>
            <person name="Arita M."/>
            <person name="Imose N."/>
            <person name="Musashino K."/>
            <person name="Yuuki H."/>
            <person name="Oshima A."/>
            <person name="Sasaki N."/>
            <person name="Aotsuka S."/>
            <person name="Yoshikawa Y."/>
            <person name="Matsunawa H."/>
            <person name="Ichihara T."/>
            <person name="Shiohata N."/>
            <person name="Sano S."/>
            <person name="Moriya S."/>
            <person name="Momiyama H."/>
            <person name="Satoh N."/>
            <person name="Takami S."/>
            <person name="Terashima Y."/>
            <person name="Suzuki O."/>
            <person name="Nakagawa S."/>
            <person name="Senoh A."/>
            <person name="Mizoguchi H."/>
            <person name="Goto Y."/>
            <person name="Shimizu F."/>
            <person name="Wakebe H."/>
            <person name="Hishigaki H."/>
            <person name="Watanabe T."/>
            <person name="Sugiyama A."/>
            <person name="Takemoto M."/>
            <person name="Kawakami B."/>
            <person name="Yamazaki M."/>
            <person name="Watanabe K."/>
            <person name="Kumagai A."/>
            <person name="Itakura S."/>
            <person name="Fukuzumi Y."/>
            <person name="Fujimori Y."/>
            <person name="Komiyama M."/>
            <person name="Tashiro H."/>
            <person name="Tanigami A."/>
            <person name="Fujiwara T."/>
            <person name="Ono T."/>
            <person name="Yamada K."/>
            <person name="Fujii Y."/>
            <person name="Ozaki K."/>
            <person name="Hirao M."/>
            <person name="Ohmori Y."/>
            <person name="Kawabata A."/>
            <person name="Hikiji T."/>
            <person name="Kobatake N."/>
            <person name="Inagaki H."/>
            <person name="Ikema Y."/>
            <person name="Okamoto S."/>
            <person name="Okitani R."/>
            <person name="Kawakami T."/>
            <person name="Noguchi S."/>
            <person name="Itoh T."/>
            <person name="Shigeta K."/>
            <person name="Senba T."/>
            <person name="Matsumura K."/>
            <person name="Nakajima Y."/>
            <person name="Mizuno T."/>
            <person name="Morinaga M."/>
            <person name="Sasaki M."/>
            <person name="Togashi T."/>
            <person name="Oyama M."/>
            <person name="Hata H."/>
            <person name="Watanabe M."/>
            <person name="Komatsu T."/>
            <person name="Mizushima-Sugano J."/>
            <person name="Satoh T."/>
            <person name="Shirai Y."/>
            <person name="Takahashi Y."/>
            <person name="Nakagawa K."/>
            <person name="Okumura K."/>
            <person name="Nagase T."/>
            <person name="Nomura N."/>
            <person name="Kikuchi H."/>
            <person name="Masuho Y."/>
            <person name="Yamashita R."/>
            <person name="Nakai K."/>
            <person name="Yada T."/>
            <person name="Nakamura Y."/>
            <person name="Ohara O."/>
            <person name="Isogai T."/>
            <person name="Sugano S."/>
        </authorList>
    </citation>
    <scope>NUCLEOTIDE SEQUENCE [LARGE SCALE MRNA]</scope>
    <source>
        <tissue>Skeletal muscle</tissue>
    </source>
</reference>
<reference key="3">
    <citation type="submission" date="2005-07" db="EMBL/GenBank/DDBJ databases">
        <authorList>
            <person name="Mural R.J."/>
            <person name="Istrail S."/>
            <person name="Sutton G.G."/>
            <person name="Florea L."/>
            <person name="Halpern A.L."/>
            <person name="Mobarry C.M."/>
            <person name="Lippert R."/>
            <person name="Walenz B."/>
            <person name="Shatkay H."/>
            <person name="Dew I."/>
            <person name="Miller J.R."/>
            <person name="Flanigan M.J."/>
            <person name="Edwards N.J."/>
            <person name="Bolanos R."/>
            <person name="Fasulo D."/>
            <person name="Halldorsson B.V."/>
            <person name="Hannenhalli S."/>
            <person name="Turner R."/>
            <person name="Yooseph S."/>
            <person name="Lu F."/>
            <person name="Nusskern D.R."/>
            <person name="Shue B.C."/>
            <person name="Zheng X.H."/>
            <person name="Zhong F."/>
            <person name="Delcher A.L."/>
            <person name="Huson D.H."/>
            <person name="Kravitz S.A."/>
            <person name="Mouchard L."/>
            <person name="Reinert K."/>
            <person name="Remington K.A."/>
            <person name="Clark A.G."/>
            <person name="Waterman M.S."/>
            <person name="Eichler E.E."/>
            <person name="Adams M.D."/>
            <person name="Hunkapiller M.W."/>
            <person name="Myers E.W."/>
            <person name="Venter J.C."/>
        </authorList>
    </citation>
    <scope>NUCLEOTIDE SEQUENCE [LARGE SCALE GENOMIC DNA]</scope>
</reference>
<reference key="4">
    <citation type="journal article" date="2004" name="Genome Res.">
        <title>The status, quality, and expansion of the NIH full-length cDNA project: the Mammalian Gene Collection (MGC).</title>
        <authorList>
            <consortium name="The MGC Project Team"/>
        </authorList>
    </citation>
    <scope>NUCLEOTIDE SEQUENCE [LARGE SCALE MRNA]</scope>
    <source>
        <tissue>B-cell</tissue>
        <tissue>Kidney</tissue>
        <tissue>Muscle</tissue>
        <tissue>Placenta</tissue>
    </source>
</reference>
<accession>Q9P0T4</accession>
<accession>B2RDM6</accession>
<name>ZN581_HUMAN</name>
<dbReference type="EMBL" id="AF151023">
    <property type="protein sequence ID" value="AAF36109.2"/>
    <property type="molecule type" value="mRNA"/>
</dbReference>
<dbReference type="EMBL" id="AK315603">
    <property type="protein sequence ID" value="BAG37973.1"/>
    <property type="molecule type" value="mRNA"/>
</dbReference>
<dbReference type="EMBL" id="CH471135">
    <property type="protein sequence ID" value="EAW72400.1"/>
    <property type="molecule type" value="Genomic_DNA"/>
</dbReference>
<dbReference type="EMBL" id="BC010097">
    <property type="protein sequence ID" value="AAH10097.1"/>
    <property type="molecule type" value="mRNA"/>
</dbReference>
<dbReference type="EMBL" id="BC001219">
    <property type="protein sequence ID" value="AAH01219.1"/>
    <property type="molecule type" value="mRNA"/>
</dbReference>
<dbReference type="EMBL" id="BC071620">
    <property type="protein sequence ID" value="AAH71620.1"/>
    <property type="molecule type" value="mRNA"/>
</dbReference>
<dbReference type="EMBL" id="BC071845">
    <property type="protein sequence ID" value="AAH71845.1"/>
    <property type="molecule type" value="mRNA"/>
</dbReference>
<dbReference type="CCDS" id="CCDS12932.1"/>
<dbReference type="RefSeq" id="NP_057619.1">
    <property type="nucleotide sequence ID" value="NM_016535.4"/>
</dbReference>
<dbReference type="RefSeq" id="XP_006723303.1">
    <property type="nucleotide sequence ID" value="XM_006723240.3"/>
</dbReference>
<dbReference type="RefSeq" id="XP_016882356.1">
    <property type="nucleotide sequence ID" value="XM_017026867.2"/>
</dbReference>
<dbReference type="SMR" id="Q9P0T4"/>
<dbReference type="BioGRID" id="119601">
    <property type="interactions" value="114"/>
</dbReference>
<dbReference type="FunCoup" id="Q9P0T4">
    <property type="interactions" value="132"/>
</dbReference>
<dbReference type="IntAct" id="Q9P0T4">
    <property type="interactions" value="118"/>
</dbReference>
<dbReference type="MINT" id="Q9P0T4"/>
<dbReference type="STRING" id="9606.ENSP00000466047"/>
<dbReference type="iPTMnet" id="Q9P0T4"/>
<dbReference type="MetOSite" id="Q9P0T4"/>
<dbReference type="PhosphoSitePlus" id="Q9P0T4"/>
<dbReference type="BioMuta" id="ZNF581"/>
<dbReference type="DMDM" id="55976774"/>
<dbReference type="jPOST" id="Q9P0T4"/>
<dbReference type="MassIVE" id="Q9P0T4"/>
<dbReference type="PaxDb" id="9606-ENSP00000466047"/>
<dbReference type="PeptideAtlas" id="Q9P0T4"/>
<dbReference type="ProteomicsDB" id="83595"/>
<dbReference type="Pumba" id="Q9P0T4"/>
<dbReference type="Antibodypedia" id="33134">
    <property type="antibodies" value="61 antibodies from 19 providers"/>
</dbReference>
<dbReference type="DNASU" id="51545"/>
<dbReference type="Ensembl" id="ENST00000270451.6">
    <property type="protein sequence ID" value="ENSP00000270451.4"/>
    <property type="gene ID" value="ENSG00000171425.10"/>
</dbReference>
<dbReference type="Ensembl" id="ENST00000587252.5">
    <property type="protein sequence ID" value="ENSP00000466047.1"/>
    <property type="gene ID" value="ENSG00000171425.10"/>
</dbReference>
<dbReference type="Ensembl" id="ENST00000588537.1">
    <property type="protein sequence ID" value="ENSP00000466564.1"/>
    <property type="gene ID" value="ENSG00000171425.10"/>
</dbReference>
<dbReference type="GeneID" id="51545"/>
<dbReference type="KEGG" id="hsa:51545"/>
<dbReference type="MANE-Select" id="ENST00000270451.6">
    <property type="protein sequence ID" value="ENSP00000270451.4"/>
    <property type="RefSeq nucleotide sequence ID" value="NM_016535.4"/>
    <property type="RefSeq protein sequence ID" value="NP_057619.1"/>
</dbReference>
<dbReference type="UCSC" id="uc002qln.4">
    <property type="organism name" value="human"/>
</dbReference>
<dbReference type="AGR" id="HGNC:25017"/>
<dbReference type="CTD" id="51545"/>
<dbReference type="DisGeNET" id="51545"/>
<dbReference type="GeneCards" id="ZNF581"/>
<dbReference type="HGNC" id="HGNC:25017">
    <property type="gene designation" value="ZNF581"/>
</dbReference>
<dbReference type="HPA" id="ENSG00000171425">
    <property type="expression patterns" value="Low tissue specificity"/>
</dbReference>
<dbReference type="neXtProt" id="NX_Q9P0T4"/>
<dbReference type="OpenTargets" id="ENSG00000171425"/>
<dbReference type="PharmGKB" id="PA134899657"/>
<dbReference type="VEuPathDB" id="HostDB:ENSG00000171425"/>
<dbReference type="eggNOG" id="KOG1721">
    <property type="taxonomic scope" value="Eukaryota"/>
</dbReference>
<dbReference type="GeneTree" id="ENSGT00940000163608"/>
<dbReference type="HOGENOM" id="CLU_002678_42_5_1"/>
<dbReference type="InParanoid" id="Q9P0T4"/>
<dbReference type="OMA" id="CGICSRT"/>
<dbReference type="OrthoDB" id="3437960at2759"/>
<dbReference type="PAN-GO" id="Q9P0T4">
    <property type="GO annotations" value="3 GO annotations based on evolutionary models"/>
</dbReference>
<dbReference type="PhylomeDB" id="Q9P0T4"/>
<dbReference type="PathwayCommons" id="Q9P0T4"/>
<dbReference type="SignaLink" id="Q9P0T4"/>
<dbReference type="BioGRID-ORCS" id="51545">
    <property type="hits" value="18 hits in 1174 CRISPR screens"/>
</dbReference>
<dbReference type="ChiTaRS" id="ZNF581">
    <property type="organism name" value="human"/>
</dbReference>
<dbReference type="GenomeRNAi" id="51545"/>
<dbReference type="Pharos" id="Q9P0T4">
    <property type="development level" value="Tdark"/>
</dbReference>
<dbReference type="PRO" id="PR:Q9P0T4"/>
<dbReference type="Proteomes" id="UP000005640">
    <property type="component" value="Chromosome 19"/>
</dbReference>
<dbReference type="RNAct" id="Q9P0T4">
    <property type="molecule type" value="protein"/>
</dbReference>
<dbReference type="Bgee" id="ENSG00000171425">
    <property type="expression patterns" value="Expressed in primordial germ cell in gonad and 155 other cell types or tissues"/>
</dbReference>
<dbReference type="ExpressionAtlas" id="Q9P0T4">
    <property type="expression patterns" value="baseline and differential"/>
</dbReference>
<dbReference type="GO" id="GO:0005634">
    <property type="term" value="C:nucleus"/>
    <property type="evidence" value="ECO:0007669"/>
    <property type="project" value="UniProtKB-SubCell"/>
</dbReference>
<dbReference type="GO" id="GO:0003700">
    <property type="term" value="F:DNA-binding transcription factor activity"/>
    <property type="evidence" value="ECO:0000318"/>
    <property type="project" value="GO_Central"/>
</dbReference>
<dbReference type="GO" id="GO:0000978">
    <property type="term" value="F:RNA polymerase II cis-regulatory region sequence-specific DNA binding"/>
    <property type="evidence" value="ECO:0000318"/>
    <property type="project" value="GO_Central"/>
</dbReference>
<dbReference type="GO" id="GO:0008270">
    <property type="term" value="F:zinc ion binding"/>
    <property type="evidence" value="ECO:0007669"/>
    <property type="project" value="UniProtKB-KW"/>
</dbReference>
<dbReference type="GO" id="GO:0006357">
    <property type="term" value="P:regulation of transcription by RNA polymerase II"/>
    <property type="evidence" value="ECO:0000318"/>
    <property type="project" value="GO_Central"/>
</dbReference>
<dbReference type="FunFam" id="3.30.160.60:FF:000400">
    <property type="entry name" value="Zinc finger protein 276"/>
    <property type="match status" value="1"/>
</dbReference>
<dbReference type="FunFam" id="3.30.160.60:FF:001419">
    <property type="entry name" value="Zinc finger protein 581"/>
    <property type="match status" value="1"/>
</dbReference>
<dbReference type="FunFam" id="3.30.160.60:FF:001496">
    <property type="entry name" value="zinc finger protein 581"/>
    <property type="match status" value="1"/>
</dbReference>
<dbReference type="FunFam" id="3.30.160.60:FF:001743">
    <property type="entry name" value="zinc finger protein 581"/>
    <property type="match status" value="1"/>
</dbReference>
<dbReference type="Gene3D" id="3.30.160.60">
    <property type="entry name" value="Classic Zinc Finger"/>
    <property type="match status" value="4"/>
</dbReference>
<dbReference type="InterPro" id="IPR036236">
    <property type="entry name" value="Znf_C2H2_sf"/>
</dbReference>
<dbReference type="InterPro" id="IPR013087">
    <property type="entry name" value="Znf_C2H2_type"/>
</dbReference>
<dbReference type="PANTHER" id="PTHR23235">
    <property type="entry name" value="KRUEPPEL-LIKE TRANSCRIPTION FACTOR"/>
    <property type="match status" value="1"/>
</dbReference>
<dbReference type="PANTHER" id="PTHR23235:SF120">
    <property type="entry name" value="KRUPPEL-LIKE FACTOR 15"/>
    <property type="match status" value="1"/>
</dbReference>
<dbReference type="Pfam" id="PF00096">
    <property type="entry name" value="zf-C2H2"/>
    <property type="match status" value="3"/>
</dbReference>
<dbReference type="Pfam" id="PF13894">
    <property type="entry name" value="zf-C2H2_4"/>
    <property type="match status" value="1"/>
</dbReference>
<dbReference type="SMART" id="SM00355">
    <property type="entry name" value="ZnF_C2H2"/>
    <property type="match status" value="4"/>
</dbReference>
<dbReference type="SUPFAM" id="SSF57667">
    <property type="entry name" value="beta-beta-alpha zinc fingers"/>
    <property type="match status" value="2"/>
</dbReference>
<dbReference type="PROSITE" id="PS00028">
    <property type="entry name" value="ZINC_FINGER_C2H2_1"/>
    <property type="match status" value="4"/>
</dbReference>
<dbReference type="PROSITE" id="PS50157">
    <property type="entry name" value="ZINC_FINGER_C2H2_2"/>
    <property type="match status" value="4"/>
</dbReference>
<gene>
    <name type="primary">ZNF581</name>
    <name type="ORF">HSPC189</name>
</gene>
<keyword id="KW-0238">DNA-binding</keyword>
<keyword id="KW-0479">Metal-binding</keyword>
<keyword id="KW-0539">Nucleus</keyword>
<keyword id="KW-1267">Proteomics identification</keyword>
<keyword id="KW-1185">Reference proteome</keyword>
<keyword id="KW-0677">Repeat</keyword>
<keyword id="KW-0804">Transcription</keyword>
<keyword id="KW-0805">Transcription regulation</keyword>
<keyword id="KW-0862">Zinc</keyword>
<keyword id="KW-0863">Zinc-finger</keyword>
<organism>
    <name type="scientific">Homo sapiens</name>
    <name type="common">Human</name>
    <dbReference type="NCBI Taxonomy" id="9606"/>
    <lineage>
        <taxon>Eukaryota</taxon>
        <taxon>Metazoa</taxon>
        <taxon>Chordata</taxon>
        <taxon>Craniata</taxon>
        <taxon>Vertebrata</taxon>
        <taxon>Euteleostomi</taxon>
        <taxon>Mammalia</taxon>
        <taxon>Eutheria</taxon>
        <taxon>Euarchontoglires</taxon>
        <taxon>Primates</taxon>
        <taxon>Haplorrhini</taxon>
        <taxon>Catarrhini</taxon>
        <taxon>Hominidae</taxon>
        <taxon>Homo</taxon>
    </lineage>
</organism>
<proteinExistence type="evidence at protein level"/>
<protein>
    <recommendedName>
        <fullName>Zinc finger protein 581</fullName>
    </recommendedName>
</protein>
<evidence type="ECO:0000255" key="1">
    <source>
        <dbReference type="PROSITE-ProRule" id="PRU00042"/>
    </source>
</evidence>
<evidence type="ECO:0000256" key="2">
    <source>
        <dbReference type="SAM" id="MobiDB-lite"/>
    </source>
</evidence>
<evidence type="ECO:0000305" key="3"/>